<accession>A2CDU4</accession>
<reference key="1">
    <citation type="journal article" date="2007" name="PLoS Genet.">
        <title>Patterns and implications of gene gain and loss in the evolution of Prochlorococcus.</title>
        <authorList>
            <person name="Kettler G.C."/>
            <person name="Martiny A.C."/>
            <person name="Huang K."/>
            <person name="Zucker J."/>
            <person name="Coleman M.L."/>
            <person name="Rodrigue S."/>
            <person name="Chen F."/>
            <person name="Lapidus A."/>
            <person name="Ferriera S."/>
            <person name="Johnson J."/>
            <person name="Steglich C."/>
            <person name="Church G.M."/>
            <person name="Richardson P."/>
            <person name="Chisholm S.W."/>
        </authorList>
    </citation>
    <scope>NUCLEOTIDE SEQUENCE [LARGE SCALE GENOMIC DNA]</scope>
    <source>
        <strain>MIT 9303</strain>
    </source>
</reference>
<evidence type="ECO:0000255" key="1">
    <source>
        <dbReference type="HAMAP-Rule" id="MF_01629"/>
    </source>
</evidence>
<dbReference type="EC" id="1.4.3.5" evidence="1"/>
<dbReference type="EMBL" id="CP000554">
    <property type="protein sequence ID" value="ABM79654.1"/>
    <property type="molecule type" value="Genomic_DNA"/>
</dbReference>
<dbReference type="RefSeq" id="WP_011827492.1">
    <property type="nucleotide sequence ID" value="NC_008820.1"/>
</dbReference>
<dbReference type="SMR" id="A2CDU4"/>
<dbReference type="STRING" id="59922.P9303_29241"/>
<dbReference type="KEGG" id="pmf:P9303_29241"/>
<dbReference type="HOGENOM" id="CLU_032263_2_2_3"/>
<dbReference type="BioCyc" id="PMAR59922:G1G80-2565-MONOMER"/>
<dbReference type="UniPathway" id="UPA01068">
    <property type="reaction ID" value="UER00304"/>
</dbReference>
<dbReference type="UniPathway" id="UPA01068">
    <property type="reaction ID" value="UER00305"/>
</dbReference>
<dbReference type="Proteomes" id="UP000002274">
    <property type="component" value="Chromosome"/>
</dbReference>
<dbReference type="GO" id="GO:0010181">
    <property type="term" value="F:FMN binding"/>
    <property type="evidence" value="ECO:0007669"/>
    <property type="project" value="UniProtKB-UniRule"/>
</dbReference>
<dbReference type="GO" id="GO:0004733">
    <property type="term" value="F:pyridoxamine phosphate oxidase activity"/>
    <property type="evidence" value="ECO:0007669"/>
    <property type="project" value="UniProtKB-UniRule"/>
</dbReference>
<dbReference type="GO" id="GO:0008615">
    <property type="term" value="P:pyridoxine biosynthetic process"/>
    <property type="evidence" value="ECO:0007669"/>
    <property type="project" value="UniProtKB-KW"/>
</dbReference>
<dbReference type="Gene3D" id="2.30.110.10">
    <property type="entry name" value="Electron Transport, Fmn-binding Protein, Chain A"/>
    <property type="match status" value="1"/>
</dbReference>
<dbReference type="HAMAP" id="MF_01629">
    <property type="entry name" value="PdxH"/>
    <property type="match status" value="1"/>
</dbReference>
<dbReference type="InterPro" id="IPR000659">
    <property type="entry name" value="Pyridox_Oxase"/>
</dbReference>
<dbReference type="InterPro" id="IPR019740">
    <property type="entry name" value="Pyridox_Oxase_CS"/>
</dbReference>
<dbReference type="InterPro" id="IPR011576">
    <property type="entry name" value="Pyridox_Oxase_N"/>
</dbReference>
<dbReference type="InterPro" id="IPR019576">
    <property type="entry name" value="Pyridoxamine_oxidase_dimer_C"/>
</dbReference>
<dbReference type="InterPro" id="IPR012349">
    <property type="entry name" value="Split_barrel_FMN-bd"/>
</dbReference>
<dbReference type="NCBIfam" id="TIGR00558">
    <property type="entry name" value="pdxH"/>
    <property type="match status" value="1"/>
</dbReference>
<dbReference type="NCBIfam" id="NF004231">
    <property type="entry name" value="PRK05679.1"/>
    <property type="match status" value="1"/>
</dbReference>
<dbReference type="PANTHER" id="PTHR10851:SF0">
    <property type="entry name" value="PYRIDOXINE-5'-PHOSPHATE OXIDASE"/>
    <property type="match status" value="1"/>
</dbReference>
<dbReference type="PANTHER" id="PTHR10851">
    <property type="entry name" value="PYRIDOXINE-5-PHOSPHATE OXIDASE"/>
    <property type="match status" value="1"/>
</dbReference>
<dbReference type="Pfam" id="PF10590">
    <property type="entry name" value="PNP_phzG_C"/>
    <property type="match status" value="1"/>
</dbReference>
<dbReference type="Pfam" id="PF01243">
    <property type="entry name" value="PNPOx_N"/>
    <property type="match status" value="1"/>
</dbReference>
<dbReference type="PIRSF" id="PIRSF000190">
    <property type="entry name" value="Pyd_amn-ph_oxd"/>
    <property type="match status" value="1"/>
</dbReference>
<dbReference type="SUPFAM" id="SSF50475">
    <property type="entry name" value="FMN-binding split barrel"/>
    <property type="match status" value="1"/>
</dbReference>
<dbReference type="PROSITE" id="PS01064">
    <property type="entry name" value="PYRIDOX_OXIDASE"/>
    <property type="match status" value="1"/>
</dbReference>
<gene>
    <name evidence="1" type="primary">pdxH</name>
    <name type="ordered locus">P9303_29241</name>
</gene>
<name>PDXH_PROM3</name>
<comment type="function">
    <text evidence="1">Catalyzes the oxidation of either pyridoxine 5'-phosphate (PNP) or pyridoxamine 5'-phosphate (PMP) into pyridoxal 5'-phosphate (PLP).</text>
</comment>
<comment type="catalytic activity">
    <reaction evidence="1">
        <text>pyridoxamine 5'-phosphate + O2 + H2O = pyridoxal 5'-phosphate + H2O2 + NH4(+)</text>
        <dbReference type="Rhea" id="RHEA:15817"/>
        <dbReference type="ChEBI" id="CHEBI:15377"/>
        <dbReference type="ChEBI" id="CHEBI:15379"/>
        <dbReference type="ChEBI" id="CHEBI:16240"/>
        <dbReference type="ChEBI" id="CHEBI:28938"/>
        <dbReference type="ChEBI" id="CHEBI:58451"/>
        <dbReference type="ChEBI" id="CHEBI:597326"/>
        <dbReference type="EC" id="1.4.3.5"/>
    </reaction>
</comment>
<comment type="catalytic activity">
    <reaction evidence="1">
        <text>pyridoxine 5'-phosphate + O2 = pyridoxal 5'-phosphate + H2O2</text>
        <dbReference type="Rhea" id="RHEA:15149"/>
        <dbReference type="ChEBI" id="CHEBI:15379"/>
        <dbReference type="ChEBI" id="CHEBI:16240"/>
        <dbReference type="ChEBI" id="CHEBI:58589"/>
        <dbReference type="ChEBI" id="CHEBI:597326"/>
        <dbReference type="EC" id="1.4.3.5"/>
    </reaction>
</comment>
<comment type="cofactor">
    <cofactor evidence="1">
        <name>FMN</name>
        <dbReference type="ChEBI" id="CHEBI:58210"/>
    </cofactor>
    <text evidence="1">Binds 1 FMN per subunit.</text>
</comment>
<comment type="pathway">
    <text evidence="1">Cofactor metabolism; pyridoxal 5'-phosphate salvage; pyridoxal 5'-phosphate from pyridoxamine 5'-phosphate: step 1/1.</text>
</comment>
<comment type="pathway">
    <text evidence="1">Cofactor metabolism; pyridoxal 5'-phosphate salvage; pyridoxal 5'-phosphate from pyridoxine 5'-phosphate: step 1/1.</text>
</comment>
<comment type="subunit">
    <text evidence="1">Homodimer.</text>
</comment>
<comment type="similarity">
    <text evidence="1">Belongs to the pyridoxamine 5'-phosphate oxidase family.</text>
</comment>
<proteinExistence type="inferred from homology"/>
<feature type="chain" id="PRO_0000292314" description="Pyridoxine/pyridoxamine 5'-phosphate oxidase">
    <location>
        <begin position="1"/>
        <end position="222"/>
    </location>
</feature>
<feature type="binding site" evidence="1">
    <location>
        <begin position="14"/>
        <end position="17"/>
    </location>
    <ligand>
        <name>substrate</name>
    </ligand>
</feature>
<feature type="binding site" evidence="1">
    <location>
        <begin position="66"/>
        <end position="71"/>
    </location>
    <ligand>
        <name>FMN</name>
        <dbReference type="ChEBI" id="CHEBI:58210"/>
    </ligand>
</feature>
<feature type="binding site" evidence="1">
    <location>
        <position position="71"/>
    </location>
    <ligand>
        <name>substrate</name>
    </ligand>
</feature>
<feature type="binding site" evidence="1">
    <location>
        <begin position="81"/>
        <end position="82"/>
    </location>
    <ligand>
        <name>FMN</name>
        <dbReference type="ChEBI" id="CHEBI:58210"/>
    </ligand>
</feature>
<feature type="binding site" evidence="1">
    <location>
        <position position="87"/>
    </location>
    <ligand>
        <name>FMN</name>
        <dbReference type="ChEBI" id="CHEBI:58210"/>
    </ligand>
</feature>
<feature type="binding site" evidence="1">
    <location>
        <position position="88"/>
    </location>
    <ligand>
        <name>FMN</name>
        <dbReference type="ChEBI" id="CHEBI:58210"/>
    </ligand>
</feature>
<feature type="binding site" evidence="1">
    <location>
        <position position="110"/>
    </location>
    <ligand>
        <name>FMN</name>
        <dbReference type="ChEBI" id="CHEBI:58210"/>
    </ligand>
</feature>
<feature type="binding site" evidence="1">
    <location>
        <position position="128"/>
    </location>
    <ligand>
        <name>substrate</name>
    </ligand>
</feature>
<feature type="binding site" evidence="1">
    <location>
        <position position="132"/>
    </location>
    <ligand>
        <name>substrate</name>
    </ligand>
</feature>
<feature type="binding site" evidence="1">
    <location>
        <position position="136"/>
    </location>
    <ligand>
        <name>substrate</name>
    </ligand>
</feature>
<feature type="binding site" evidence="1">
    <location>
        <begin position="145"/>
        <end position="146"/>
    </location>
    <ligand>
        <name>FMN</name>
        <dbReference type="ChEBI" id="CHEBI:58210"/>
    </ligand>
</feature>
<feature type="binding site" evidence="1">
    <location>
        <position position="190"/>
    </location>
    <ligand>
        <name>FMN</name>
        <dbReference type="ChEBI" id="CHEBI:58210"/>
    </ligand>
</feature>
<feature type="binding site" evidence="1">
    <location>
        <begin position="196"/>
        <end position="198"/>
    </location>
    <ligand>
        <name>substrate</name>
    </ligand>
</feature>
<feature type="binding site" evidence="1">
    <location>
        <position position="200"/>
    </location>
    <ligand>
        <name>FMN</name>
        <dbReference type="ChEBI" id="CHEBI:58210"/>
    </ligand>
</feature>
<protein>
    <recommendedName>
        <fullName evidence="1">Pyridoxine/pyridoxamine 5'-phosphate oxidase</fullName>
        <ecNumber evidence="1">1.4.3.5</ecNumber>
    </recommendedName>
    <alternativeName>
        <fullName evidence="1">PNP/PMP oxidase</fullName>
        <shortName evidence="1">PNPOx</shortName>
    </alternativeName>
    <alternativeName>
        <fullName evidence="1">Pyridoxal 5'-phosphate synthase</fullName>
    </alternativeName>
</protein>
<keyword id="KW-0285">Flavoprotein</keyword>
<keyword id="KW-0288">FMN</keyword>
<keyword id="KW-0560">Oxidoreductase</keyword>
<keyword id="KW-0664">Pyridoxine biosynthesis</keyword>
<sequence>MGAPSPDQDIAAIRRNYQRASLRRVDLDADPVEQFRRWLQQAIAADLQESTAMVLSTFDGKRPSSRTVLLKAFDKRGFVFFTNYGSRKAQDISAHPNVSLLFPWYDLERQVAIMGPAERISRAESQAYFSSRPFGSRLGVWVSQQSQVISSRQILKMKWQEMNRRFANGEVPLPEFWGGFRVVPTEFEFWQGRENRLNDRFRYRPQQDSHHAQTWRIERLAP</sequence>
<organism>
    <name type="scientific">Prochlorococcus marinus (strain MIT 9303)</name>
    <dbReference type="NCBI Taxonomy" id="59922"/>
    <lineage>
        <taxon>Bacteria</taxon>
        <taxon>Bacillati</taxon>
        <taxon>Cyanobacteriota</taxon>
        <taxon>Cyanophyceae</taxon>
        <taxon>Synechococcales</taxon>
        <taxon>Prochlorococcaceae</taxon>
        <taxon>Prochlorococcus</taxon>
    </lineage>
</organism>